<sequence>MKNNAQLLMPREKMLKFGISALTDVELLALFLRTGTRGKDVLTLAKEMLENFGSLYGLLTSEYEQFSGVHGIGVAKFAQLKGIAELARRYYNVRMREESPLLSPEMTREFLQSQLTGEEREIFMVIFLDSQHRVITHSRLFSGTLNHVEVHPREIIREAIKINASALILAHNHPSGCAEPSKADKLITERIIKSCQFMDLRVLDHIVIGRGEYVSFAERGWI</sequence>
<accession>B7MFJ9</accession>
<organism>
    <name type="scientific">Escherichia coli O45:K1 (strain S88 / ExPEC)</name>
    <dbReference type="NCBI Taxonomy" id="585035"/>
    <lineage>
        <taxon>Bacteria</taxon>
        <taxon>Pseudomonadati</taxon>
        <taxon>Pseudomonadota</taxon>
        <taxon>Gammaproteobacteria</taxon>
        <taxon>Enterobacterales</taxon>
        <taxon>Enterobacteriaceae</taxon>
        <taxon>Escherichia</taxon>
    </lineage>
</organism>
<evidence type="ECO:0000255" key="1">
    <source>
        <dbReference type="HAMAP-Rule" id="MF_00018"/>
    </source>
</evidence>
<evidence type="ECO:0000255" key="2">
    <source>
        <dbReference type="PROSITE-ProRule" id="PRU01182"/>
    </source>
</evidence>
<keyword id="KW-0378">Hydrolase</keyword>
<keyword id="KW-0479">Metal-binding</keyword>
<keyword id="KW-0482">Metalloprotease</keyword>
<keyword id="KW-0645">Protease</keyword>
<keyword id="KW-1185">Reference proteome</keyword>
<keyword id="KW-0862">Zinc</keyword>
<reference key="1">
    <citation type="journal article" date="2009" name="PLoS Genet.">
        <title>Organised genome dynamics in the Escherichia coli species results in highly diverse adaptive paths.</title>
        <authorList>
            <person name="Touchon M."/>
            <person name="Hoede C."/>
            <person name="Tenaillon O."/>
            <person name="Barbe V."/>
            <person name="Baeriswyl S."/>
            <person name="Bidet P."/>
            <person name="Bingen E."/>
            <person name="Bonacorsi S."/>
            <person name="Bouchier C."/>
            <person name="Bouvet O."/>
            <person name="Calteau A."/>
            <person name="Chiapello H."/>
            <person name="Clermont O."/>
            <person name="Cruveiller S."/>
            <person name="Danchin A."/>
            <person name="Diard M."/>
            <person name="Dossat C."/>
            <person name="Karoui M.E."/>
            <person name="Frapy E."/>
            <person name="Garry L."/>
            <person name="Ghigo J.M."/>
            <person name="Gilles A.M."/>
            <person name="Johnson J."/>
            <person name="Le Bouguenec C."/>
            <person name="Lescat M."/>
            <person name="Mangenot S."/>
            <person name="Martinez-Jehanne V."/>
            <person name="Matic I."/>
            <person name="Nassif X."/>
            <person name="Oztas S."/>
            <person name="Petit M.A."/>
            <person name="Pichon C."/>
            <person name="Rouy Z."/>
            <person name="Ruf C.S."/>
            <person name="Schneider D."/>
            <person name="Tourret J."/>
            <person name="Vacherie B."/>
            <person name="Vallenet D."/>
            <person name="Medigue C."/>
            <person name="Rocha E.P.C."/>
            <person name="Denamur E."/>
        </authorList>
    </citation>
    <scope>NUCLEOTIDE SEQUENCE [LARGE SCALE GENOMIC DNA]</scope>
    <source>
        <strain>S88 / ExPEC</strain>
    </source>
</reference>
<dbReference type="EMBL" id="CU928161">
    <property type="protein sequence ID" value="CAR05261.1"/>
    <property type="molecule type" value="Genomic_DNA"/>
</dbReference>
<dbReference type="SMR" id="B7MFJ9"/>
<dbReference type="KEGG" id="ecz:ECS88_4052"/>
<dbReference type="HOGENOM" id="CLU_073529_0_1_6"/>
<dbReference type="Proteomes" id="UP000000747">
    <property type="component" value="Chromosome"/>
</dbReference>
<dbReference type="GO" id="GO:0046872">
    <property type="term" value="F:metal ion binding"/>
    <property type="evidence" value="ECO:0007669"/>
    <property type="project" value="UniProtKB-KW"/>
</dbReference>
<dbReference type="GO" id="GO:0008237">
    <property type="term" value="F:metallopeptidase activity"/>
    <property type="evidence" value="ECO:0007669"/>
    <property type="project" value="UniProtKB-KW"/>
</dbReference>
<dbReference type="GO" id="GO:0006508">
    <property type="term" value="P:proteolysis"/>
    <property type="evidence" value="ECO:0007669"/>
    <property type="project" value="UniProtKB-KW"/>
</dbReference>
<dbReference type="CDD" id="cd08071">
    <property type="entry name" value="MPN_DUF2466"/>
    <property type="match status" value="1"/>
</dbReference>
<dbReference type="Gene3D" id="3.40.140.10">
    <property type="entry name" value="Cytidine Deaminase, domain 2"/>
    <property type="match status" value="1"/>
</dbReference>
<dbReference type="HAMAP" id="MF_00018">
    <property type="entry name" value="UPF0758_YicR"/>
    <property type="match status" value="1"/>
</dbReference>
<dbReference type="InterPro" id="IPR037518">
    <property type="entry name" value="MPN"/>
</dbReference>
<dbReference type="InterPro" id="IPR025657">
    <property type="entry name" value="RadC_JAB"/>
</dbReference>
<dbReference type="InterPro" id="IPR010994">
    <property type="entry name" value="RuvA_2-like"/>
</dbReference>
<dbReference type="InterPro" id="IPR001405">
    <property type="entry name" value="UPF0758"/>
</dbReference>
<dbReference type="InterPro" id="IPR020891">
    <property type="entry name" value="UPF0758_CS"/>
</dbReference>
<dbReference type="InterPro" id="IPR046778">
    <property type="entry name" value="UPF0758_N"/>
</dbReference>
<dbReference type="InterPro" id="IPR022820">
    <property type="entry name" value="UPF0758_YicR"/>
</dbReference>
<dbReference type="NCBIfam" id="NF000642">
    <property type="entry name" value="PRK00024.1"/>
    <property type="match status" value="1"/>
</dbReference>
<dbReference type="NCBIfam" id="TIGR00608">
    <property type="entry name" value="radc"/>
    <property type="match status" value="1"/>
</dbReference>
<dbReference type="PANTHER" id="PTHR30471">
    <property type="entry name" value="DNA REPAIR PROTEIN RADC"/>
    <property type="match status" value="1"/>
</dbReference>
<dbReference type="PANTHER" id="PTHR30471:SF3">
    <property type="entry name" value="UPF0758 PROTEIN YEES-RELATED"/>
    <property type="match status" value="1"/>
</dbReference>
<dbReference type="Pfam" id="PF04002">
    <property type="entry name" value="RadC"/>
    <property type="match status" value="1"/>
</dbReference>
<dbReference type="Pfam" id="PF20582">
    <property type="entry name" value="UPF0758_N"/>
    <property type="match status" value="1"/>
</dbReference>
<dbReference type="SUPFAM" id="SSF47781">
    <property type="entry name" value="RuvA domain 2-like"/>
    <property type="match status" value="1"/>
</dbReference>
<dbReference type="PROSITE" id="PS50249">
    <property type="entry name" value="MPN"/>
    <property type="match status" value="1"/>
</dbReference>
<dbReference type="PROSITE" id="PS01302">
    <property type="entry name" value="UPF0758"/>
    <property type="match status" value="1"/>
</dbReference>
<gene>
    <name evidence="1" type="primary">yicR</name>
    <name type="ordered locus">ECS88_4052</name>
</gene>
<protein>
    <recommendedName>
        <fullName evidence="1">UPF0758 protein YicR</fullName>
    </recommendedName>
</protein>
<name>YICR_ECO45</name>
<proteinExistence type="inferred from homology"/>
<feature type="chain" id="PRO_1000116354" description="UPF0758 protein YicR">
    <location>
        <begin position="1"/>
        <end position="222"/>
    </location>
</feature>
<feature type="domain" description="MPN" evidence="2">
    <location>
        <begin position="100"/>
        <end position="222"/>
    </location>
</feature>
<feature type="short sequence motif" description="JAMM motif" evidence="2">
    <location>
        <begin position="171"/>
        <end position="184"/>
    </location>
</feature>
<feature type="binding site" evidence="2">
    <location>
        <position position="171"/>
    </location>
    <ligand>
        <name>Zn(2+)</name>
        <dbReference type="ChEBI" id="CHEBI:29105"/>
        <note>catalytic</note>
    </ligand>
</feature>
<feature type="binding site" evidence="2">
    <location>
        <position position="173"/>
    </location>
    <ligand>
        <name>Zn(2+)</name>
        <dbReference type="ChEBI" id="CHEBI:29105"/>
        <note>catalytic</note>
    </ligand>
</feature>
<feature type="binding site" evidence="2">
    <location>
        <position position="184"/>
    </location>
    <ligand>
        <name>Zn(2+)</name>
        <dbReference type="ChEBI" id="CHEBI:29105"/>
        <note>catalytic</note>
    </ligand>
</feature>
<comment type="similarity">
    <text evidence="1">Belongs to the UPF0758 family. YicR subfamily.</text>
</comment>